<sequence length="139" mass="15447">MGAMPRVQSVVAPILREDPRLAGVTIVTWVPDIDFREFPMINIRRIGGIRNANAPKLHSLPVVEMSAYSTDGLIECEELYETALEVLYDAVKNGTQTPAGYLSSIFETMGATQFSSLYQDSWRIQGLIRLGVRTPRSTT</sequence>
<proteinExistence type="predicted"/>
<name>VG22_BPMD2</name>
<dbReference type="EMBL" id="AF022214">
    <property type="protein sequence ID" value="AAC18463.1"/>
    <property type="molecule type" value="Genomic_DNA"/>
</dbReference>
<dbReference type="PIR" id="D72802">
    <property type="entry name" value="D72802"/>
</dbReference>
<dbReference type="RefSeq" id="NP_046838.1">
    <property type="nucleotide sequence ID" value="NC_001900.1"/>
</dbReference>
<dbReference type="SMR" id="O64216"/>
<dbReference type="GeneID" id="1261583"/>
<dbReference type="KEGG" id="vg:1261583"/>
<dbReference type="OrthoDB" id="15306at10239"/>
<dbReference type="Proteomes" id="UP000002131">
    <property type="component" value="Segment"/>
</dbReference>
<keyword id="KW-1185">Reference proteome</keyword>
<organism>
    <name type="scientific">Mycobacterium phage D29</name>
    <name type="common">Mycobacteriophage D29</name>
    <dbReference type="NCBI Taxonomy" id="28369"/>
    <lineage>
        <taxon>Viruses</taxon>
        <taxon>Duplodnaviria</taxon>
        <taxon>Heunggongvirae</taxon>
        <taxon>Uroviricota</taxon>
        <taxon>Caudoviricetes</taxon>
        <taxon>Fromanvirus</taxon>
    </lineage>
</organism>
<protein>
    <recommendedName>
        <fullName>Gene 22 protein</fullName>
    </recommendedName>
    <alternativeName>
        <fullName>Gp22</fullName>
    </alternativeName>
</protein>
<organismHost>
    <name type="scientific">Mycobacterium</name>
    <dbReference type="NCBI Taxonomy" id="1763"/>
</organismHost>
<reference key="1">
    <citation type="journal article" date="1998" name="J. Mol. Biol.">
        <title>Genome structure of mycobacteriophage D29: implications for phage evolution.</title>
        <authorList>
            <person name="Ford M.E."/>
            <person name="Sarkis G.J."/>
            <person name="Belanger A.E."/>
            <person name="Hendrix R.W."/>
            <person name="Hatfull G.F."/>
        </authorList>
    </citation>
    <scope>NUCLEOTIDE SEQUENCE [LARGE SCALE GENOMIC DNA]</scope>
</reference>
<feature type="chain" id="PRO_0000164732" description="Gene 22 protein">
    <location>
        <begin position="1"/>
        <end position="139"/>
    </location>
</feature>
<accession>O64216</accession>
<gene>
    <name type="primary">22</name>
</gene>